<sequence length="252" mass="27709">MKLKIDLNCDLGEAFGNYTFGGDQHILPLITSANIACGYHAGDEDVMNETVQLAKKNNISIGAHPGLPDLKGFGRRKMDLTPNEIYNLVIYQLGALSGFCKINHVKMMHVKPHGALYQMGARNKEIAHAIAQAVFDFDSNLIFVGLANTLLISEAELVGLKVASEVFADRRYEDDGQLVSRKKTDATITNTDEAIQQALKMVLENKVVSKNGKIIDLKADTICVHGDGKHALEFVTQIRNELMKEGIDIQSL</sequence>
<gene>
    <name evidence="1" type="primary">pxpA</name>
    <name type="ordered locus">SE_1287</name>
</gene>
<feature type="chain" id="PRO_0000185049" description="5-oxoprolinase subunit A">
    <location>
        <begin position="1"/>
        <end position="252"/>
    </location>
</feature>
<comment type="function">
    <text evidence="1">Catalyzes the cleavage of 5-oxoproline to form L-glutamate coupled to the hydrolysis of ATP to ADP and inorganic phosphate.</text>
</comment>
<comment type="catalytic activity">
    <reaction evidence="1">
        <text>5-oxo-L-proline + ATP + 2 H2O = L-glutamate + ADP + phosphate + H(+)</text>
        <dbReference type="Rhea" id="RHEA:10348"/>
        <dbReference type="ChEBI" id="CHEBI:15377"/>
        <dbReference type="ChEBI" id="CHEBI:15378"/>
        <dbReference type="ChEBI" id="CHEBI:29985"/>
        <dbReference type="ChEBI" id="CHEBI:30616"/>
        <dbReference type="ChEBI" id="CHEBI:43474"/>
        <dbReference type="ChEBI" id="CHEBI:58402"/>
        <dbReference type="ChEBI" id="CHEBI:456216"/>
        <dbReference type="EC" id="3.5.2.9"/>
    </reaction>
</comment>
<comment type="subunit">
    <text evidence="1">Forms a complex composed of PxpA, PxpB and PxpC.</text>
</comment>
<comment type="similarity">
    <text evidence="1">Belongs to the LamB/PxpA family.</text>
</comment>
<organism>
    <name type="scientific">Staphylococcus epidermidis (strain ATCC 12228 / FDA PCI 1200)</name>
    <dbReference type="NCBI Taxonomy" id="176280"/>
    <lineage>
        <taxon>Bacteria</taxon>
        <taxon>Bacillati</taxon>
        <taxon>Bacillota</taxon>
        <taxon>Bacilli</taxon>
        <taxon>Bacillales</taxon>
        <taxon>Staphylococcaceae</taxon>
        <taxon>Staphylococcus</taxon>
    </lineage>
</organism>
<proteinExistence type="inferred from homology"/>
<accession>Q8CSB6</accession>
<reference key="1">
    <citation type="journal article" date="2003" name="Mol. Microbiol.">
        <title>Genome-based analysis of virulence genes in a non-biofilm-forming Staphylococcus epidermidis strain (ATCC 12228).</title>
        <authorList>
            <person name="Zhang Y.-Q."/>
            <person name="Ren S.-X."/>
            <person name="Li H.-L."/>
            <person name="Wang Y.-X."/>
            <person name="Fu G."/>
            <person name="Yang J."/>
            <person name="Qin Z.-Q."/>
            <person name="Miao Y.-G."/>
            <person name="Wang W.-Y."/>
            <person name="Chen R.-S."/>
            <person name="Shen Y."/>
            <person name="Chen Z."/>
            <person name="Yuan Z.-H."/>
            <person name="Zhao G.-P."/>
            <person name="Qu D."/>
            <person name="Danchin A."/>
            <person name="Wen Y.-M."/>
        </authorList>
    </citation>
    <scope>NUCLEOTIDE SEQUENCE [LARGE SCALE GENOMIC DNA]</scope>
    <source>
        <strain>ATCC 12228 / FDA PCI 1200</strain>
    </source>
</reference>
<protein>
    <recommendedName>
        <fullName evidence="1">5-oxoprolinase subunit A</fullName>
        <shortName evidence="1">5-OPase subunit A</shortName>
        <ecNumber evidence="1">3.5.2.9</ecNumber>
    </recommendedName>
    <alternativeName>
        <fullName evidence="1">5-oxoprolinase (ATP-hydrolyzing) subunit A</fullName>
    </alternativeName>
</protein>
<dbReference type="EC" id="3.5.2.9" evidence="1"/>
<dbReference type="EMBL" id="AE015929">
    <property type="protein sequence ID" value="AAO04886.1"/>
    <property type="molecule type" value="Genomic_DNA"/>
</dbReference>
<dbReference type="RefSeq" id="NP_764842.1">
    <property type="nucleotide sequence ID" value="NC_004461.1"/>
</dbReference>
<dbReference type="SMR" id="Q8CSB6"/>
<dbReference type="KEGG" id="sep:SE_1287"/>
<dbReference type="PATRIC" id="fig|176280.10.peg.1256"/>
<dbReference type="eggNOG" id="COG1540">
    <property type="taxonomic scope" value="Bacteria"/>
</dbReference>
<dbReference type="HOGENOM" id="CLU_069535_0_0_9"/>
<dbReference type="OrthoDB" id="9773478at2"/>
<dbReference type="Proteomes" id="UP000001411">
    <property type="component" value="Chromosome"/>
</dbReference>
<dbReference type="GO" id="GO:0017168">
    <property type="term" value="F:5-oxoprolinase (ATP-hydrolyzing) activity"/>
    <property type="evidence" value="ECO:0007669"/>
    <property type="project" value="UniProtKB-UniRule"/>
</dbReference>
<dbReference type="GO" id="GO:0005524">
    <property type="term" value="F:ATP binding"/>
    <property type="evidence" value="ECO:0007669"/>
    <property type="project" value="UniProtKB-UniRule"/>
</dbReference>
<dbReference type="GO" id="GO:0005975">
    <property type="term" value="P:carbohydrate metabolic process"/>
    <property type="evidence" value="ECO:0007669"/>
    <property type="project" value="InterPro"/>
</dbReference>
<dbReference type="CDD" id="cd10787">
    <property type="entry name" value="LamB_YcsF_like"/>
    <property type="match status" value="1"/>
</dbReference>
<dbReference type="Gene3D" id="3.20.20.370">
    <property type="entry name" value="Glycoside hydrolase/deacetylase"/>
    <property type="match status" value="1"/>
</dbReference>
<dbReference type="HAMAP" id="MF_00691">
    <property type="entry name" value="PxpA"/>
    <property type="match status" value="1"/>
</dbReference>
<dbReference type="InterPro" id="IPR011330">
    <property type="entry name" value="Glyco_hydro/deAcase_b/a-brl"/>
</dbReference>
<dbReference type="InterPro" id="IPR005501">
    <property type="entry name" value="LamB/YcsF/PxpA-like"/>
</dbReference>
<dbReference type="NCBIfam" id="NF003813">
    <property type="entry name" value="PRK05406.1-2"/>
    <property type="match status" value="1"/>
</dbReference>
<dbReference type="NCBIfam" id="NF003814">
    <property type="entry name" value="PRK05406.1-3"/>
    <property type="match status" value="1"/>
</dbReference>
<dbReference type="NCBIfam" id="NF003816">
    <property type="entry name" value="PRK05406.1-5"/>
    <property type="match status" value="1"/>
</dbReference>
<dbReference type="PANTHER" id="PTHR30292:SF0">
    <property type="entry name" value="5-OXOPROLINASE SUBUNIT A"/>
    <property type="match status" value="1"/>
</dbReference>
<dbReference type="PANTHER" id="PTHR30292">
    <property type="entry name" value="UNCHARACTERIZED PROTEIN YBGL-RELATED"/>
    <property type="match status" value="1"/>
</dbReference>
<dbReference type="Pfam" id="PF03746">
    <property type="entry name" value="LamB_YcsF"/>
    <property type="match status" value="1"/>
</dbReference>
<dbReference type="SUPFAM" id="SSF88713">
    <property type="entry name" value="Glycoside hydrolase/deacetylase"/>
    <property type="match status" value="1"/>
</dbReference>
<evidence type="ECO:0000255" key="1">
    <source>
        <dbReference type="HAMAP-Rule" id="MF_00691"/>
    </source>
</evidence>
<keyword id="KW-0067">ATP-binding</keyword>
<keyword id="KW-0378">Hydrolase</keyword>
<keyword id="KW-0547">Nucleotide-binding</keyword>
<name>PXPA_STAES</name>